<evidence type="ECO:0000255" key="1">
    <source>
        <dbReference type="HAMAP-Rule" id="MF_00535"/>
    </source>
</evidence>
<feature type="chain" id="PRO_1000128227" description="Cyanate hydratase">
    <location>
        <begin position="1"/>
        <end position="156"/>
    </location>
</feature>
<feature type="active site" evidence="1">
    <location>
        <position position="96"/>
    </location>
</feature>
<feature type="active site" evidence="1">
    <location>
        <position position="99"/>
    </location>
</feature>
<feature type="active site" evidence="1">
    <location>
        <position position="122"/>
    </location>
</feature>
<keyword id="KW-0456">Lyase</keyword>
<reference key="1">
    <citation type="journal article" date="2009" name="PLoS Genet.">
        <title>Organised genome dynamics in the Escherichia coli species results in highly diverse adaptive paths.</title>
        <authorList>
            <person name="Touchon M."/>
            <person name="Hoede C."/>
            <person name="Tenaillon O."/>
            <person name="Barbe V."/>
            <person name="Baeriswyl S."/>
            <person name="Bidet P."/>
            <person name="Bingen E."/>
            <person name="Bonacorsi S."/>
            <person name="Bouchier C."/>
            <person name="Bouvet O."/>
            <person name="Calteau A."/>
            <person name="Chiapello H."/>
            <person name="Clermont O."/>
            <person name="Cruveiller S."/>
            <person name="Danchin A."/>
            <person name="Diard M."/>
            <person name="Dossat C."/>
            <person name="Karoui M.E."/>
            <person name="Frapy E."/>
            <person name="Garry L."/>
            <person name="Ghigo J.M."/>
            <person name="Gilles A.M."/>
            <person name="Johnson J."/>
            <person name="Le Bouguenec C."/>
            <person name="Lescat M."/>
            <person name="Mangenot S."/>
            <person name="Martinez-Jehanne V."/>
            <person name="Matic I."/>
            <person name="Nassif X."/>
            <person name="Oztas S."/>
            <person name="Petit M.A."/>
            <person name="Pichon C."/>
            <person name="Rouy Z."/>
            <person name="Ruf C.S."/>
            <person name="Schneider D."/>
            <person name="Tourret J."/>
            <person name="Vacherie B."/>
            <person name="Vallenet D."/>
            <person name="Medigue C."/>
            <person name="Rocha E.P.C."/>
            <person name="Denamur E."/>
        </authorList>
    </citation>
    <scope>NUCLEOTIDE SEQUENCE [LARGE SCALE GENOMIC DNA]</scope>
    <source>
        <strain>UMN026 / ExPEC</strain>
    </source>
</reference>
<sequence>MIQSQINRNIRLDLADAILLSKAKKDLSFAEIADGTGLAEAFVTAALLGQQALPADAARQVGAKLDLDEDAILLLQMIPLRGCIDDRIPTDPTMYRFYEMLQVYGTTLKALVHEKFGDGIISAINFKLDVKKVADPEGGERAVITLDGKYLPTKPF</sequence>
<name>CYNS_ECOLU</name>
<accession>B7N8P7</accession>
<comment type="function">
    <text evidence="1">Catalyzes the reaction of cyanate with bicarbonate to produce ammonia and carbon dioxide.</text>
</comment>
<comment type="catalytic activity">
    <reaction evidence="1">
        <text>cyanate + hydrogencarbonate + 3 H(+) = NH4(+) + 2 CO2</text>
        <dbReference type="Rhea" id="RHEA:11120"/>
        <dbReference type="ChEBI" id="CHEBI:15378"/>
        <dbReference type="ChEBI" id="CHEBI:16526"/>
        <dbReference type="ChEBI" id="CHEBI:17544"/>
        <dbReference type="ChEBI" id="CHEBI:28938"/>
        <dbReference type="ChEBI" id="CHEBI:29195"/>
        <dbReference type="EC" id="4.2.1.104"/>
    </reaction>
</comment>
<comment type="similarity">
    <text evidence="1">Belongs to the cyanase family.</text>
</comment>
<protein>
    <recommendedName>
        <fullName evidence="1">Cyanate hydratase</fullName>
        <shortName evidence="1">Cyanase</shortName>
        <ecNumber evidence="1">4.2.1.104</ecNumber>
    </recommendedName>
    <alternativeName>
        <fullName evidence="1">Cyanate hydrolase</fullName>
    </alternativeName>
    <alternativeName>
        <fullName evidence="1">Cyanate lyase</fullName>
    </alternativeName>
</protein>
<gene>
    <name evidence="1" type="primary">cynS</name>
    <name type="ordered locus">ECUMN_0383</name>
</gene>
<dbReference type="EC" id="4.2.1.104" evidence="1"/>
<dbReference type="EMBL" id="CU928163">
    <property type="protein sequence ID" value="CAR11598.1"/>
    <property type="molecule type" value="Genomic_DNA"/>
</dbReference>
<dbReference type="RefSeq" id="WP_000616247.1">
    <property type="nucleotide sequence ID" value="NC_011751.1"/>
</dbReference>
<dbReference type="RefSeq" id="YP_002411146.1">
    <property type="nucleotide sequence ID" value="NC_011751.1"/>
</dbReference>
<dbReference type="SMR" id="B7N8P7"/>
<dbReference type="STRING" id="585056.ECUMN_0383"/>
<dbReference type="GeneID" id="75170316"/>
<dbReference type="KEGG" id="eum:ECUMN_0383"/>
<dbReference type="PATRIC" id="fig|585056.7.peg.581"/>
<dbReference type="HOGENOM" id="CLU_103452_1_1_6"/>
<dbReference type="Proteomes" id="UP000007097">
    <property type="component" value="Chromosome"/>
</dbReference>
<dbReference type="GO" id="GO:0008824">
    <property type="term" value="F:cyanate hydratase activity"/>
    <property type="evidence" value="ECO:0007669"/>
    <property type="project" value="UniProtKB-UniRule"/>
</dbReference>
<dbReference type="GO" id="GO:0003677">
    <property type="term" value="F:DNA binding"/>
    <property type="evidence" value="ECO:0007669"/>
    <property type="project" value="InterPro"/>
</dbReference>
<dbReference type="GO" id="GO:0009439">
    <property type="term" value="P:cyanate metabolic process"/>
    <property type="evidence" value="ECO:0007669"/>
    <property type="project" value="UniProtKB-UniRule"/>
</dbReference>
<dbReference type="CDD" id="cd00559">
    <property type="entry name" value="Cyanase_C"/>
    <property type="match status" value="1"/>
</dbReference>
<dbReference type="FunFam" id="3.30.1160.10:FF:000001">
    <property type="entry name" value="Cyanate hydratase"/>
    <property type="match status" value="1"/>
</dbReference>
<dbReference type="Gene3D" id="3.30.1160.10">
    <property type="entry name" value="Cyanate lyase, C-terminal domain"/>
    <property type="match status" value="1"/>
</dbReference>
<dbReference type="Gene3D" id="1.10.260.40">
    <property type="entry name" value="lambda repressor-like DNA-binding domains"/>
    <property type="match status" value="1"/>
</dbReference>
<dbReference type="HAMAP" id="MF_00535">
    <property type="entry name" value="Cyanate_hydrat"/>
    <property type="match status" value="1"/>
</dbReference>
<dbReference type="InterPro" id="IPR008076">
    <property type="entry name" value="Cyanase"/>
</dbReference>
<dbReference type="InterPro" id="IPR003712">
    <property type="entry name" value="Cyanate_lyase_C"/>
</dbReference>
<dbReference type="InterPro" id="IPR036581">
    <property type="entry name" value="Cyanate_lyase_C_sf"/>
</dbReference>
<dbReference type="InterPro" id="IPR048564">
    <property type="entry name" value="CYNS_N"/>
</dbReference>
<dbReference type="InterPro" id="IPR010982">
    <property type="entry name" value="Lambda_DNA-bd_dom_sf"/>
</dbReference>
<dbReference type="NCBIfam" id="TIGR00673">
    <property type="entry name" value="cynS"/>
    <property type="match status" value="1"/>
</dbReference>
<dbReference type="NCBIfam" id="NF002773">
    <property type="entry name" value="PRK02866.1"/>
    <property type="match status" value="1"/>
</dbReference>
<dbReference type="PANTHER" id="PTHR34186">
    <property type="entry name" value="CYANATE HYDRATASE"/>
    <property type="match status" value="1"/>
</dbReference>
<dbReference type="PANTHER" id="PTHR34186:SF2">
    <property type="entry name" value="CYANATE HYDRATASE"/>
    <property type="match status" value="1"/>
</dbReference>
<dbReference type="Pfam" id="PF02560">
    <property type="entry name" value="Cyanate_lyase"/>
    <property type="match status" value="1"/>
</dbReference>
<dbReference type="Pfam" id="PF21291">
    <property type="entry name" value="CYNS_N"/>
    <property type="match status" value="1"/>
</dbReference>
<dbReference type="PIRSF" id="PIRSF001263">
    <property type="entry name" value="Cyanate_hydratas"/>
    <property type="match status" value="1"/>
</dbReference>
<dbReference type="PRINTS" id="PR01693">
    <property type="entry name" value="CYANASE"/>
</dbReference>
<dbReference type="SMART" id="SM01116">
    <property type="entry name" value="Cyanate_lyase"/>
    <property type="match status" value="1"/>
</dbReference>
<dbReference type="SUPFAM" id="SSF55234">
    <property type="entry name" value="Cyanase C-terminal domain"/>
    <property type="match status" value="1"/>
</dbReference>
<dbReference type="SUPFAM" id="SSF47413">
    <property type="entry name" value="lambda repressor-like DNA-binding domains"/>
    <property type="match status" value="1"/>
</dbReference>
<organism>
    <name type="scientific">Escherichia coli O17:K52:H18 (strain UMN026 / ExPEC)</name>
    <dbReference type="NCBI Taxonomy" id="585056"/>
    <lineage>
        <taxon>Bacteria</taxon>
        <taxon>Pseudomonadati</taxon>
        <taxon>Pseudomonadota</taxon>
        <taxon>Gammaproteobacteria</taxon>
        <taxon>Enterobacterales</taxon>
        <taxon>Enterobacteriaceae</taxon>
        <taxon>Escherichia</taxon>
    </lineage>
</organism>
<proteinExistence type="inferred from homology"/>